<keyword id="KW-0963">Cytoplasm</keyword>
<keyword id="KW-0448">Lipopolysaccharide biosynthesis</keyword>
<keyword id="KW-1185">Reference proteome</keyword>
<keyword id="KW-0808">Transferase</keyword>
<reference key="1">
    <citation type="journal article" date="2003" name="Proc. Natl. Acad. Sci. U.S.A.">
        <title>The complete genome sequence of the Arabidopsis and tomato pathogen Pseudomonas syringae pv. tomato DC3000.</title>
        <authorList>
            <person name="Buell C.R."/>
            <person name="Joardar V."/>
            <person name="Lindeberg M."/>
            <person name="Selengut J."/>
            <person name="Paulsen I.T."/>
            <person name="Gwinn M.L."/>
            <person name="Dodson R.J."/>
            <person name="DeBoy R.T."/>
            <person name="Durkin A.S."/>
            <person name="Kolonay J.F."/>
            <person name="Madupu R."/>
            <person name="Daugherty S.C."/>
            <person name="Brinkac L.M."/>
            <person name="Beanan M.J."/>
            <person name="Haft D.H."/>
            <person name="Nelson W.C."/>
            <person name="Davidsen T.M."/>
            <person name="Zafar N."/>
            <person name="Zhou L."/>
            <person name="Liu J."/>
            <person name="Yuan Q."/>
            <person name="Khouri H.M."/>
            <person name="Fedorova N.B."/>
            <person name="Tran B."/>
            <person name="Russell D."/>
            <person name="Berry K.J."/>
            <person name="Utterback T.R."/>
            <person name="Van Aken S.E."/>
            <person name="Feldblyum T.V."/>
            <person name="D'Ascenzo M."/>
            <person name="Deng W.-L."/>
            <person name="Ramos A.R."/>
            <person name="Alfano J.R."/>
            <person name="Cartinhour S."/>
            <person name="Chatterjee A.K."/>
            <person name="Delaney T.P."/>
            <person name="Lazarowitz S.G."/>
            <person name="Martin G.B."/>
            <person name="Schneider D.J."/>
            <person name="Tang X."/>
            <person name="Bender C.L."/>
            <person name="White O."/>
            <person name="Fraser C.M."/>
            <person name="Collmer A."/>
        </authorList>
    </citation>
    <scope>NUCLEOTIDE SEQUENCE [LARGE SCALE GENOMIC DNA]</scope>
    <source>
        <strain>ATCC BAA-871 / DC3000</strain>
    </source>
</reference>
<feature type="chain" id="PRO_0000187153" description="2-dehydro-3-deoxyphosphooctonate aldolase">
    <location>
        <begin position="1"/>
        <end position="281"/>
    </location>
</feature>
<organism>
    <name type="scientific">Pseudomonas syringae pv. tomato (strain ATCC BAA-871 / DC3000)</name>
    <dbReference type="NCBI Taxonomy" id="223283"/>
    <lineage>
        <taxon>Bacteria</taxon>
        <taxon>Pseudomonadati</taxon>
        <taxon>Pseudomonadota</taxon>
        <taxon>Gammaproteobacteria</taxon>
        <taxon>Pseudomonadales</taxon>
        <taxon>Pseudomonadaceae</taxon>
        <taxon>Pseudomonas</taxon>
    </lineage>
</organism>
<name>KDSA_PSESM</name>
<sequence>MAQKIIRTGSIEIANDKPMVVFGGMNVLESRDMAMQVCEEYVRVTEKLGIPYVFKASFDKANRSSVNSYRGPGLEEGMRIFEEIKRTFNVPLITDVHEPHQAAVVAEVCDIIQLPAFLSRQTDLVVAMAKTGAIINIKKAQFLAPQEMKHILTKCEEAGNDQLILCERGSSFGYNNLVVDMLGFGIMKQFEYPVLFDVTHALQMPGGRSDSAGGRRAQVLDLAKAGISQNLAGLFLEAHPDPDNAKCDGPCALRLDKLEPFLAQLKSLDELVKSFPIVETA</sequence>
<evidence type="ECO:0000255" key="1">
    <source>
        <dbReference type="HAMAP-Rule" id="MF_00056"/>
    </source>
</evidence>
<proteinExistence type="inferred from homology"/>
<gene>
    <name evidence="1" type="primary">kdsA</name>
    <name type="ordered locus">PSPTO_1553</name>
</gene>
<protein>
    <recommendedName>
        <fullName evidence="1">2-dehydro-3-deoxyphosphooctonate aldolase</fullName>
        <ecNumber evidence="1">2.5.1.55</ecNumber>
    </recommendedName>
    <alternativeName>
        <fullName evidence="1">3-deoxy-D-manno-octulosonic acid 8-phosphate synthase</fullName>
    </alternativeName>
    <alternativeName>
        <fullName evidence="1">KDO-8-phosphate synthase</fullName>
        <shortName evidence="1">KDO 8-P synthase</shortName>
        <shortName evidence="1">KDOPS</shortName>
    </alternativeName>
    <alternativeName>
        <fullName evidence="1">Phospho-2-dehydro-3-deoxyoctonate aldolase</fullName>
    </alternativeName>
</protein>
<accession>Q886M4</accession>
<comment type="catalytic activity">
    <reaction evidence="1">
        <text>D-arabinose 5-phosphate + phosphoenolpyruvate + H2O = 3-deoxy-alpha-D-manno-2-octulosonate-8-phosphate + phosphate</text>
        <dbReference type="Rhea" id="RHEA:14053"/>
        <dbReference type="ChEBI" id="CHEBI:15377"/>
        <dbReference type="ChEBI" id="CHEBI:43474"/>
        <dbReference type="ChEBI" id="CHEBI:57693"/>
        <dbReference type="ChEBI" id="CHEBI:58702"/>
        <dbReference type="ChEBI" id="CHEBI:85985"/>
        <dbReference type="EC" id="2.5.1.55"/>
    </reaction>
</comment>
<comment type="pathway">
    <text evidence="1">Carbohydrate biosynthesis; 3-deoxy-D-manno-octulosonate biosynthesis; 3-deoxy-D-manno-octulosonate from D-ribulose 5-phosphate: step 2/3.</text>
</comment>
<comment type="pathway">
    <text evidence="1">Bacterial outer membrane biogenesis; lipopolysaccharide biosynthesis.</text>
</comment>
<comment type="subcellular location">
    <subcellularLocation>
        <location evidence="1">Cytoplasm</location>
    </subcellularLocation>
</comment>
<comment type="similarity">
    <text evidence="1">Belongs to the KdsA family.</text>
</comment>
<dbReference type="EC" id="2.5.1.55" evidence="1"/>
<dbReference type="EMBL" id="AE016853">
    <property type="protein sequence ID" value="AAO55073.1"/>
    <property type="molecule type" value="Genomic_DNA"/>
</dbReference>
<dbReference type="RefSeq" id="NP_791378.1">
    <property type="nucleotide sequence ID" value="NC_004578.1"/>
</dbReference>
<dbReference type="RefSeq" id="WP_003377831.1">
    <property type="nucleotide sequence ID" value="NC_004578.1"/>
</dbReference>
<dbReference type="SMR" id="Q886M4"/>
<dbReference type="STRING" id="223283.PSPTO_1553"/>
<dbReference type="GeneID" id="61791883"/>
<dbReference type="KEGG" id="pst:PSPTO_1553"/>
<dbReference type="PATRIC" id="fig|223283.9.peg.1579"/>
<dbReference type="eggNOG" id="COG2877">
    <property type="taxonomic scope" value="Bacteria"/>
</dbReference>
<dbReference type="HOGENOM" id="CLU_036666_0_0_6"/>
<dbReference type="OrthoDB" id="9776934at2"/>
<dbReference type="PhylomeDB" id="Q886M4"/>
<dbReference type="UniPathway" id="UPA00030"/>
<dbReference type="UniPathway" id="UPA00357">
    <property type="reaction ID" value="UER00474"/>
</dbReference>
<dbReference type="Proteomes" id="UP000002515">
    <property type="component" value="Chromosome"/>
</dbReference>
<dbReference type="GO" id="GO:0005737">
    <property type="term" value="C:cytoplasm"/>
    <property type="evidence" value="ECO:0007669"/>
    <property type="project" value="UniProtKB-SubCell"/>
</dbReference>
<dbReference type="GO" id="GO:0008676">
    <property type="term" value="F:3-deoxy-8-phosphooctulonate synthase activity"/>
    <property type="evidence" value="ECO:0007669"/>
    <property type="project" value="UniProtKB-UniRule"/>
</dbReference>
<dbReference type="GO" id="GO:0019294">
    <property type="term" value="P:keto-3-deoxy-D-manno-octulosonic acid biosynthetic process"/>
    <property type="evidence" value="ECO:0007669"/>
    <property type="project" value="UniProtKB-UniRule"/>
</dbReference>
<dbReference type="Gene3D" id="3.20.20.70">
    <property type="entry name" value="Aldolase class I"/>
    <property type="match status" value="1"/>
</dbReference>
<dbReference type="HAMAP" id="MF_00056">
    <property type="entry name" value="KDO8P_synth"/>
    <property type="match status" value="1"/>
</dbReference>
<dbReference type="InterPro" id="IPR013785">
    <property type="entry name" value="Aldolase_TIM"/>
</dbReference>
<dbReference type="InterPro" id="IPR006218">
    <property type="entry name" value="DAHP1/KDSA"/>
</dbReference>
<dbReference type="InterPro" id="IPR006269">
    <property type="entry name" value="KDO8P_synthase"/>
</dbReference>
<dbReference type="NCBIfam" id="TIGR01362">
    <property type="entry name" value="KDO8P_synth"/>
    <property type="match status" value="1"/>
</dbReference>
<dbReference type="NCBIfam" id="NF003543">
    <property type="entry name" value="PRK05198.1"/>
    <property type="match status" value="1"/>
</dbReference>
<dbReference type="NCBIfam" id="NF009109">
    <property type="entry name" value="PRK12457.1"/>
    <property type="match status" value="1"/>
</dbReference>
<dbReference type="PANTHER" id="PTHR21057">
    <property type="entry name" value="PHOSPHO-2-DEHYDRO-3-DEOXYHEPTONATE ALDOLASE"/>
    <property type="match status" value="1"/>
</dbReference>
<dbReference type="Pfam" id="PF00793">
    <property type="entry name" value="DAHP_synth_1"/>
    <property type="match status" value="1"/>
</dbReference>
<dbReference type="SUPFAM" id="SSF51569">
    <property type="entry name" value="Aldolase"/>
    <property type="match status" value="1"/>
</dbReference>